<name>MPK17_ARATH</name>
<proteinExistence type="evidence at transcript level"/>
<dbReference type="EC" id="2.7.11.24"/>
<dbReference type="EMBL" id="AC005560">
    <property type="protein sequence ID" value="AAC67338.1"/>
    <property type="status" value="ALT_SEQ"/>
    <property type="molecule type" value="Genomic_DNA"/>
</dbReference>
<dbReference type="EMBL" id="CP002685">
    <property type="protein sequence ID" value="AEC05452.1"/>
    <property type="molecule type" value="Genomic_DNA"/>
</dbReference>
<dbReference type="EMBL" id="CP002685">
    <property type="protein sequence ID" value="AEC05453.1"/>
    <property type="molecule type" value="Genomic_DNA"/>
</dbReference>
<dbReference type="EMBL" id="CP002685">
    <property type="protein sequence ID" value="AEC05454.1"/>
    <property type="molecule type" value="Genomic_DNA"/>
</dbReference>
<dbReference type="EMBL" id="CP002685">
    <property type="protein sequence ID" value="AEC05455.1"/>
    <property type="molecule type" value="Genomic_DNA"/>
</dbReference>
<dbReference type="EMBL" id="BT006469">
    <property type="protein sequence ID" value="AAP21277.1"/>
    <property type="molecule type" value="mRNA"/>
</dbReference>
<dbReference type="PIR" id="H84424">
    <property type="entry name" value="H84424"/>
</dbReference>
<dbReference type="RefSeq" id="NP_001030939.1">
    <property type="nucleotide sequence ID" value="NM_001035862.2"/>
</dbReference>
<dbReference type="RefSeq" id="NP_001030940.1">
    <property type="nucleotide sequence ID" value="NM_001035863.1"/>
</dbReference>
<dbReference type="RefSeq" id="NP_001030941.1">
    <property type="nucleotide sequence ID" value="NM_001035864.1"/>
</dbReference>
<dbReference type="RefSeq" id="NP_178254.2">
    <property type="nucleotide sequence ID" value="NM_126206.4"/>
</dbReference>
<dbReference type="SMR" id="Q84M93"/>
<dbReference type="BioGRID" id="76">
    <property type="interactions" value="1"/>
</dbReference>
<dbReference type="FunCoup" id="Q84M93">
    <property type="interactions" value="135"/>
</dbReference>
<dbReference type="IntAct" id="Q84M93">
    <property type="interactions" value="2"/>
</dbReference>
<dbReference type="STRING" id="3702.Q84M93"/>
<dbReference type="iPTMnet" id="Q84M93"/>
<dbReference type="PaxDb" id="3702-AT2G01450.3"/>
<dbReference type="ProteomicsDB" id="238276"/>
<dbReference type="EnsemblPlants" id="AT2G01450.1">
    <property type="protein sequence ID" value="AT2G01450.1"/>
    <property type="gene ID" value="AT2G01450"/>
</dbReference>
<dbReference type="EnsemblPlants" id="AT2G01450.2">
    <property type="protein sequence ID" value="AT2G01450.2"/>
    <property type="gene ID" value="AT2G01450"/>
</dbReference>
<dbReference type="EnsemblPlants" id="AT2G01450.3">
    <property type="protein sequence ID" value="AT2G01450.3"/>
    <property type="gene ID" value="AT2G01450"/>
</dbReference>
<dbReference type="EnsemblPlants" id="AT2G01450.4">
    <property type="protein sequence ID" value="AT2G01450.4"/>
    <property type="gene ID" value="AT2G01450"/>
</dbReference>
<dbReference type="GeneID" id="814673"/>
<dbReference type="Gramene" id="AT2G01450.1">
    <property type="protein sequence ID" value="AT2G01450.1"/>
    <property type="gene ID" value="AT2G01450"/>
</dbReference>
<dbReference type="Gramene" id="AT2G01450.2">
    <property type="protein sequence ID" value="AT2G01450.2"/>
    <property type="gene ID" value="AT2G01450"/>
</dbReference>
<dbReference type="Gramene" id="AT2G01450.3">
    <property type="protein sequence ID" value="AT2G01450.3"/>
    <property type="gene ID" value="AT2G01450"/>
</dbReference>
<dbReference type="Gramene" id="AT2G01450.4">
    <property type="protein sequence ID" value="AT2G01450.4"/>
    <property type="gene ID" value="AT2G01450"/>
</dbReference>
<dbReference type="KEGG" id="ath:AT2G01450"/>
<dbReference type="Araport" id="AT2G01450"/>
<dbReference type="TAIR" id="AT2G01450">
    <property type="gene designation" value="MPK17"/>
</dbReference>
<dbReference type="eggNOG" id="KOG0660">
    <property type="taxonomic scope" value="Eukaryota"/>
</dbReference>
<dbReference type="HOGENOM" id="CLU_000288_181_5_1"/>
<dbReference type="InParanoid" id="Q84M93"/>
<dbReference type="OMA" id="VWDDCED"/>
<dbReference type="OrthoDB" id="2396at2759"/>
<dbReference type="PhylomeDB" id="Q84M93"/>
<dbReference type="PRO" id="PR:Q84M93"/>
<dbReference type="Proteomes" id="UP000006548">
    <property type="component" value="Chromosome 2"/>
</dbReference>
<dbReference type="ExpressionAtlas" id="Q84M93">
    <property type="expression patterns" value="baseline and differential"/>
</dbReference>
<dbReference type="GO" id="GO:0005524">
    <property type="term" value="F:ATP binding"/>
    <property type="evidence" value="ECO:0007669"/>
    <property type="project" value="UniProtKB-KW"/>
</dbReference>
<dbReference type="GO" id="GO:0004707">
    <property type="term" value="F:MAP kinase activity"/>
    <property type="evidence" value="ECO:0000250"/>
    <property type="project" value="TAIR"/>
</dbReference>
<dbReference type="GO" id="GO:0106310">
    <property type="term" value="F:protein serine kinase activity"/>
    <property type="evidence" value="ECO:0007669"/>
    <property type="project" value="RHEA"/>
</dbReference>
<dbReference type="GO" id="GO:0004674">
    <property type="term" value="F:protein serine/threonine kinase activity"/>
    <property type="evidence" value="ECO:0007005"/>
    <property type="project" value="TAIR"/>
</dbReference>
<dbReference type="GO" id="GO:1900064">
    <property type="term" value="P:positive regulation of peroxisome organization"/>
    <property type="evidence" value="ECO:0000316"/>
    <property type="project" value="TAIR"/>
</dbReference>
<dbReference type="GO" id="GO:0046777">
    <property type="term" value="P:protein autophosphorylation"/>
    <property type="evidence" value="ECO:0007005"/>
    <property type="project" value="TAIR"/>
</dbReference>
<dbReference type="CDD" id="cd07859">
    <property type="entry name" value="STKc_TDY_MAPK"/>
    <property type="match status" value="1"/>
</dbReference>
<dbReference type="FunFam" id="1.10.510.10:FF:000017">
    <property type="entry name" value="Mitogen-activated protein kinase"/>
    <property type="match status" value="1"/>
</dbReference>
<dbReference type="FunFam" id="3.30.200.20:FF:000046">
    <property type="entry name" value="Mitogen-activated protein kinase"/>
    <property type="match status" value="1"/>
</dbReference>
<dbReference type="FunFam" id="3.30.200.20:FF:000578">
    <property type="entry name" value="Mitogen-activated protein kinase"/>
    <property type="match status" value="1"/>
</dbReference>
<dbReference type="Gene3D" id="3.30.200.20">
    <property type="entry name" value="Phosphorylase Kinase, domain 1"/>
    <property type="match status" value="1"/>
</dbReference>
<dbReference type="Gene3D" id="1.10.510.10">
    <property type="entry name" value="Transferase(Phosphotransferase) domain 1"/>
    <property type="match status" value="1"/>
</dbReference>
<dbReference type="InterPro" id="IPR011009">
    <property type="entry name" value="Kinase-like_dom_sf"/>
</dbReference>
<dbReference type="InterPro" id="IPR050117">
    <property type="entry name" value="MAP_kinase"/>
</dbReference>
<dbReference type="InterPro" id="IPR003527">
    <property type="entry name" value="MAP_kinase_CS"/>
</dbReference>
<dbReference type="InterPro" id="IPR000719">
    <property type="entry name" value="Prot_kinase_dom"/>
</dbReference>
<dbReference type="InterPro" id="IPR017441">
    <property type="entry name" value="Protein_kinase_ATP_BS"/>
</dbReference>
<dbReference type="PANTHER" id="PTHR24055">
    <property type="entry name" value="MITOGEN-ACTIVATED PROTEIN KINASE"/>
    <property type="match status" value="1"/>
</dbReference>
<dbReference type="Pfam" id="PF00069">
    <property type="entry name" value="Pkinase"/>
    <property type="match status" value="1"/>
</dbReference>
<dbReference type="SMART" id="SM00220">
    <property type="entry name" value="S_TKc"/>
    <property type="match status" value="1"/>
</dbReference>
<dbReference type="SUPFAM" id="SSF56112">
    <property type="entry name" value="Protein kinase-like (PK-like)"/>
    <property type="match status" value="1"/>
</dbReference>
<dbReference type="PROSITE" id="PS01351">
    <property type="entry name" value="MAPK"/>
    <property type="match status" value="1"/>
</dbReference>
<dbReference type="PROSITE" id="PS00107">
    <property type="entry name" value="PROTEIN_KINASE_ATP"/>
    <property type="match status" value="1"/>
</dbReference>
<dbReference type="PROSITE" id="PS50011">
    <property type="entry name" value="PROTEIN_KINASE_DOM"/>
    <property type="match status" value="1"/>
</dbReference>
<accession>Q84M93</accession>
<accession>Q9ZVF9</accession>
<sequence>MLEKEFFTEYGEASQYQIQEVVGKGSYGVVASAECPHTGGKVAIKKMTNVFEHVSDAIRILREIKLLRLLRHPDIVEIKHIMLPPCRKEFKDIYVVFELMESDLHHVLKVNDDLTPQHHQFFLYQLLRGLKFMHSAHVFHRDLKPKNILANADCKIKICDLGLARVSFTDSPSAVFWTDYVATRWYRAPELCGSFYSNYTPAIDMWSVGCIFAEMLTGKPLFPGKNVVHQLELVTDLLGTPSPITLSRIRNEKARKYLGNMRRKDPVPFTHKFPNIDPVALKLLQRLIAFDPKDRPSAEEALADPYFQGLANVDYEPSRQPISKLEFEFERRKLTRDDVRELMYREILEYHPQMLQEYLQGEENINSHFLYPSGVDQFKQEFARLEEHNDDEEEHNSPPHQRKYTSLPRERVCSSEDEGSDSVHAQSSSASVVFTPPQTPNTATGLSSQKASQVDKAATPVKRSACLMRSDSICASRCVGVSSAVS</sequence>
<feature type="chain" id="PRO_0000245817" description="Mitogen-activated protein kinase 17">
    <location>
        <begin position="1"/>
        <end position="486"/>
    </location>
</feature>
<feature type="domain" description="Protein kinase" evidence="3">
    <location>
        <begin position="16"/>
        <end position="307"/>
    </location>
</feature>
<feature type="region of interest" description="Disordered" evidence="4">
    <location>
        <begin position="386"/>
        <end position="455"/>
    </location>
</feature>
<feature type="short sequence motif" description="TXY">
    <location>
        <begin position="178"/>
        <end position="180"/>
    </location>
</feature>
<feature type="compositionally biased region" description="Low complexity" evidence="4">
    <location>
        <begin position="422"/>
        <end position="433"/>
    </location>
</feature>
<feature type="compositionally biased region" description="Polar residues" evidence="4">
    <location>
        <begin position="440"/>
        <end position="452"/>
    </location>
</feature>
<feature type="active site" description="Proton acceptor" evidence="3">
    <location>
        <position position="142"/>
    </location>
</feature>
<feature type="binding site" evidence="3">
    <location>
        <begin position="22"/>
        <end position="30"/>
    </location>
    <ligand>
        <name>ATP</name>
        <dbReference type="ChEBI" id="CHEBI:30616"/>
    </ligand>
</feature>
<feature type="binding site" evidence="3">
    <location>
        <position position="45"/>
    </location>
    <ligand>
        <name>ATP</name>
        <dbReference type="ChEBI" id="CHEBI:30616"/>
    </ligand>
</feature>
<feature type="modified residue" description="Phosphothreonine" evidence="2">
    <location>
        <position position="178"/>
    </location>
</feature>
<feature type="modified residue" description="Phosphotyrosine" evidence="2">
    <location>
        <position position="180"/>
    </location>
</feature>
<feature type="modified residue" description="Phosphothreonine" evidence="2">
    <location>
        <position position="183"/>
    </location>
</feature>
<reference key="1">
    <citation type="journal article" date="1999" name="Nature">
        <title>Sequence and analysis of chromosome 2 of the plant Arabidopsis thaliana.</title>
        <authorList>
            <person name="Lin X."/>
            <person name="Kaul S."/>
            <person name="Rounsley S.D."/>
            <person name="Shea T.P."/>
            <person name="Benito M.-I."/>
            <person name="Town C.D."/>
            <person name="Fujii C.Y."/>
            <person name="Mason T.M."/>
            <person name="Bowman C.L."/>
            <person name="Barnstead M.E."/>
            <person name="Feldblyum T.V."/>
            <person name="Buell C.R."/>
            <person name="Ketchum K.A."/>
            <person name="Lee J.J."/>
            <person name="Ronning C.M."/>
            <person name="Koo H.L."/>
            <person name="Moffat K.S."/>
            <person name="Cronin L.A."/>
            <person name="Shen M."/>
            <person name="Pai G."/>
            <person name="Van Aken S."/>
            <person name="Umayam L."/>
            <person name="Tallon L.J."/>
            <person name="Gill J.E."/>
            <person name="Adams M.D."/>
            <person name="Carrera A.J."/>
            <person name="Creasy T.H."/>
            <person name="Goodman H.M."/>
            <person name="Somerville C.R."/>
            <person name="Copenhaver G.P."/>
            <person name="Preuss D."/>
            <person name="Nierman W.C."/>
            <person name="White O."/>
            <person name="Eisen J.A."/>
            <person name="Salzberg S.L."/>
            <person name="Fraser C.M."/>
            <person name="Venter J.C."/>
        </authorList>
    </citation>
    <scope>NUCLEOTIDE SEQUENCE [LARGE SCALE GENOMIC DNA]</scope>
    <source>
        <strain>cv. Columbia</strain>
    </source>
</reference>
<reference key="2">
    <citation type="journal article" date="2017" name="Plant J.">
        <title>Araport11: a complete reannotation of the Arabidopsis thaliana reference genome.</title>
        <authorList>
            <person name="Cheng C.Y."/>
            <person name="Krishnakumar V."/>
            <person name="Chan A.P."/>
            <person name="Thibaud-Nissen F."/>
            <person name="Schobel S."/>
            <person name="Town C.D."/>
        </authorList>
    </citation>
    <scope>GENOME REANNOTATION</scope>
    <source>
        <strain>cv. Columbia</strain>
    </source>
</reference>
<reference key="3">
    <citation type="journal article" date="2003" name="Science">
        <title>Empirical analysis of transcriptional activity in the Arabidopsis genome.</title>
        <authorList>
            <person name="Yamada K."/>
            <person name="Lim J."/>
            <person name="Dale J.M."/>
            <person name="Chen H."/>
            <person name="Shinn P."/>
            <person name="Palm C.J."/>
            <person name="Southwick A.M."/>
            <person name="Wu H.C."/>
            <person name="Kim C.J."/>
            <person name="Nguyen M."/>
            <person name="Pham P.K."/>
            <person name="Cheuk R.F."/>
            <person name="Karlin-Newmann G."/>
            <person name="Liu S.X."/>
            <person name="Lam B."/>
            <person name="Sakano H."/>
            <person name="Wu T."/>
            <person name="Yu G."/>
            <person name="Miranda M."/>
            <person name="Quach H.L."/>
            <person name="Tripp M."/>
            <person name="Chang C.H."/>
            <person name="Lee J.M."/>
            <person name="Toriumi M.J."/>
            <person name="Chan M.M."/>
            <person name="Tang C.C."/>
            <person name="Onodera C.S."/>
            <person name="Deng J.M."/>
            <person name="Akiyama K."/>
            <person name="Ansari Y."/>
            <person name="Arakawa T."/>
            <person name="Banh J."/>
            <person name="Banno F."/>
            <person name="Bowser L."/>
            <person name="Brooks S.Y."/>
            <person name="Carninci P."/>
            <person name="Chao Q."/>
            <person name="Choy N."/>
            <person name="Enju A."/>
            <person name="Goldsmith A.D."/>
            <person name="Gurjal M."/>
            <person name="Hansen N.F."/>
            <person name="Hayashizaki Y."/>
            <person name="Johnson-Hopson C."/>
            <person name="Hsuan V.W."/>
            <person name="Iida K."/>
            <person name="Karnes M."/>
            <person name="Khan S."/>
            <person name="Koesema E."/>
            <person name="Ishida J."/>
            <person name="Jiang P.X."/>
            <person name="Jones T."/>
            <person name="Kawai J."/>
            <person name="Kamiya A."/>
            <person name="Meyers C."/>
            <person name="Nakajima M."/>
            <person name="Narusaka M."/>
            <person name="Seki M."/>
            <person name="Sakurai T."/>
            <person name="Satou M."/>
            <person name="Tamse R."/>
            <person name="Vaysberg M."/>
            <person name="Wallender E.K."/>
            <person name="Wong C."/>
            <person name="Yamamura Y."/>
            <person name="Yuan S."/>
            <person name="Shinozaki K."/>
            <person name="Davis R.W."/>
            <person name="Theologis A."/>
            <person name="Ecker J.R."/>
        </authorList>
    </citation>
    <scope>NUCLEOTIDE SEQUENCE [LARGE SCALE MRNA]</scope>
    <source>
        <strain>cv. Columbia</strain>
    </source>
</reference>
<reference key="4">
    <citation type="journal article" date="2002" name="Trends Plant Sci.">
        <title>Mitogen-activated protein kinase cascades in plants: a new nomenclature.</title>
        <authorList>
            <consortium name="MAPK group"/>
        </authorList>
    </citation>
    <scope>GENE FAMILY</scope>
    <scope>NOMENCLATURE</scope>
</reference>
<reference key="5">
    <citation type="journal article" date="2006" name="Trends Plant Sci.">
        <title>Ancient signals: comparative genomics of plant MAPK and MAPKK gene families.</title>
        <authorList>
            <person name="Hamel L.P."/>
            <person name="Nicole M.C."/>
            <person name="Sritubtim S."/>
            <person name="Morency M.J."/>
            <person name="Ellis M."/>
            <person name="Ehlting J."/>
            <person name="Beaudoin N."/>
            <person name="Barbazuk B."/>
            <person name="Klessig D."/>
            <person name="Lee J."/>
            <person name="Martin G."/>
            <person name="Mundy J."/>
            <person name="Ohashi Y."/>
            <person name="Scheel D."/>
            <person name="Sheen J."/>
            <person name="Xing T."/>
            <person name="Zhang S."/>
            <person name="Seguin A."/>
            <person name="Ellis B.E."/>
        </authorList>
    </citation>
    <scope>GENE FAMILY</scope>
</reference>
<evidence type="ECO:0000250" key="1"/>
<evidence type="ECO:0000250" key="2">
    <source>
        <dbReference type="UniProtKB" id="Q39026"/>
    </source>
</evidence>
<evidence type="ECO:0000255" key="3">
    <source>
        <dbReference type="PROSITE-ProRule" id="PRU00159"/>
    </source>
</evidence>
<evidence type="ECO:0000256" key="4">
    <source>
        <dbReference type="SAM" id="MobiDB-lite"/>
    </source>
</evidence>
<evidence type="ECO:0000305" key="5"/>
<protein>
    <recommendedName>
        <fullName>Mitogen-activated protein kinase 17</fullName>
        <shortName>AtMPK17</shortName>
        <shortName>MAP kinase 17</shortName>
        <ecNumber>2.7.11.24</ecNumber>
    </recommendedName>
</protein>
<keyword id="KW-0067">ATP-binding</keyword>
<keyword id="KW-0418">Kinase</keyword>
<keyword id="KW-0547">Nucleotide-binding</keyword>
<keyword id="KW-0597">Phosphoprotein</keyword>
<keyword id="KW-1185">Reference proteome</keyword>
<keyword id="KW-0723">Serine/threonine-protein kinase</keyword>
<keyword id="KW-0808">Transferase</keyword>
<gene>
    <name type="primary">MPK17</name>
    <name type="ordered locus">At2g01450</name>
    <name type="ORF">F2I9.7</name>
</gene>
<comment type="catalytic activity">
    <reaction>
        <text>L-seryl-[protein] + ATP = O-phospho-L-seryl-[protein] + ADP + H(+)</text>
        <dbReference type="Rhea" id="RHEA:17989"/>
        <dbReference type="Rhea" id="RHEA-COMP:9863"/>
        <dbReference type="Rhea" id="RHEA-COMP:11604"/>
        <dbReference type="ChEBI" id="CHEBI:15378"/>
        <dbReference type="ChEBI" id="CHEBI:29999"/>
        <dbReference type="ChEBI" id="CHEBI:30616"/>
        <dbReference type="ChEBI" id="CHEBI:83421"/>
        <dbReference type="ChEBI" id="CHEBI:456216"/>
        <dbReference type="EC" id="2.7.11.24"/>
    </reaction>
</comment>
<comment type="catalytic activity">
    <reaction>
        <text>L-threonyl-[protein] + ATP = O-phospho-L-threonyl-[protein] + ADP + H(+)</text>
        <dbReference type="Rhea" id="RHEA:46608"/>
        <dbReference type="Rhea" id="RHEA-COMP:11060"/>
        <dbReference type="Rhea" id="RHEA-COMP:11605"/>
        <dbReference type="ChEBI" id="CHEBI:15378"/>
        <dbReference type="ChEBI" id="CHEBI:30013"/>
        <dbReference type="ChEBI" id="CHEBI:30616"/>
        <dbReference type="ChEBI" id="CHEBI:61977"/>
        <dbReference type="ChEBI" id="CHEBI:456216"/>
        <dbReference type="EC" id="2.7.11.24"/>
    </reaction>
</comment>
<comment type="activity regulation">
    <text evidence="1">Activated by threonine and tyrosine phosphorylation.</text>
</comment>
<comment type="domain">
    <text>The TXY motif contains the threonine and tyrosine residues whose phosphorylation activates the MAP kinases.</text>
</comment>
<comment type="PTM">
    <text evidence="1">Dually phosphorylated on Thr-178 and Tyr-180, which activates the enzyme.</text>
</comment>
<comment type="similarity">
    <text evidence="5">Belongs to the protein kinase superfamily. CMGC Ser/Thr protein kinase family. MAP kinase subfamily.</text>
</comment>
<comment type="sequence caution" evidence="5">
    <conflict type="erroneous gene model prediction">
        <sequence resource="EMBL-CDS" id="AAC67338"/>
    </conflict>
</comment>
<organism>
    <name type="scientific">Arabidopsis thaliana</name>
    <name type="common">Mouse-ear cress</name>
    <dbReference type="NCBI Taxonomy" id="3702"/>
    <lineage>
        <taxon>Eukaryota</taxon>
        <taxon>Viridiplantae</taxon>
        <taxon>Streptophyta</taxon>
        <taxon>Embryophyta</taxon>
        <taxon>Tracheophyta</taxon>
        <taxon>Spermatophyta</taxon>
        <taxon>Magnoliopsida</taxon>
        <taxon>eudicotyledons</taxon>
        <taxon>Gunneridae</taxon>
        <taxon>Pentapetalae</taxon>
        <taxon>rosids</taxon>
        <taxon>malvids</taxon>
        <taxon>Brassicales</taxon>
        <taxon>Brassicaceae</taxon>
        <taxon>Camelineae</taxon>
        <taxon>Arabidopsis</taxon>
    </lineage>
</organism>